<protein>
    <recommendedName>
        <fullName evidence="1">ATP synthase subunit b</fullName>
    </recommendedName>
    <alternativeName>
        <fullName evidence="1">ATP synthase F(0) sector subunit b</fullName>
    </alternativeName>
    <alternativeName>
        <fullName evidence="1">ATPase subunit I</fullName>
    </alternativeName>
    <alternativeName>
        <fullName evidence="1">F-type ATPase subunit b</fullName>
        <shortName evidence="1">F-ATPase subunit b</shortName>
    </alternativeName>
</protein>
<feature type="chain" id="PRO_0000368882" description="ATP synthase subunit b">
    <location>
        <begin position="1"/>
        <end position="156"/>
    </location>
</feature>
<feature type="transmembrane region" description="Helical" evidence="1">
    <location>
        <begin position="11"/>
        <end position="31"/>
    </location>
</feature>
<comment type="function">
    <text evidence="1">F(1)F(0) ATP synthase produces ATP from ADP in the presence of a proton or sodium gradient. F-type ATPases consist of two structural domains, F(1) containing the extramembraneous catalytic core and F(0) containing the membrane proton channel, linked together by a central stalk and a peripheral stalk. During catalysis, ATP synthesis in the catalytic domain of F(1) is coupled via a rotary mechanism of the central stalk subunits to proton translocation.</text>
</comment>
<comment type="function">
    <text evidence="1">Component of the F(0) channel, it forms part of the peripheral stalk, linking F(1) to F(0).</text>
</comment>
<comment type="subunit">
    <text evidence="1">F-type ATPases have 2 components, F(1) - the catalytic core - and F(0) - the membrane proton channel. F(1) has five subunits: alpha(3), beta(3), gamma(1), delta(1), epsilon(1). F(0) has three main subunits: a(1), b(2) and c(10-14). The alpha and beta chains form an alternating ring which encloses part of the gamma chain. F(1) is attached to F(0) by a central stalk formed by the gamma and epsilon chains, while a peripheral stalk is formed by the delta and b chains.</text>
</comment>
<comment type="subcellular location">
    <subcellularLocation>
        <location evidence="1">Cell inner membrane</location>
        <topology evidence="1">Single-pass membrane protein</topology>
    </subcellularLocation>
</comment>
<comment type="similarity">
    <text evidence="1">Belongs to the ATPase B chain family.</text>
</comment>
<name>ATPF_YERPN</name>
<dbReference type="EMBL" id="CP000305">
    <property type="protein sequence ID" value="ABG20309.1"/>
    <property type="molecule type" value="Genomic_DNA"/>
</dbReference>
<dbReference type="EMBL" id="ACNQ01000019">
    <property type="protein sequence ID" value="EEO74908.1"/>
    <property type="molecule type" value="Genomic_DNA"/>
</dbReference>
<dbReference type="RefSeq" id="WP_002220762.1">
    <property type="nucleotide sequence ID" value="NZ_ACNQ01000019.1"/>
</dbReference>
<dbReference type="SMR" id="Q1CCH1"/>
<dbReference type="GeneID" id="57974599"/>
<dbReference type="KEGG" id="ypn:YPN_3982"/>
<dbReference type="HOGENOM" id="CLU_079215_4_5_6"/>
<dbReference type="Proteomes" id="UP000008936">
    <property type="component" value="Chromosome"/>
</dbReference>
<dbReference type="GO" id="GO:0005886">
    <property type="term" value="C:plasma membrane"/>
    <property type="evidence" value="ECO:0007669"/>
    <property type="project" value="UniProtKB-SubCell"/>
</dbReference>
<dbReference type="GO" id="GO:0045259">
    <property type="term" value="C:proton-transporting ATP synthase complex"/>
    <property type="evidence" value="ECO:0007669"/>
    <property type="project" value="UniProtKB-KW"/>
</dbReference>
<dbReference type="GO" id="GO:0046933">
    <property type="term" value="F:proton-transporting ATP synthase activity, rotational mechanism"/>
    <property type="evidence" value="ECO:0007669"/>
    <property type="project" value="UniProtKB-UniRule"/>
</dbReference>
<dbReference type="GO" id="GO:0046961">
    <property type="term" value="F:proton-transporting ATPase activity, rotational mechanism"/>
    <property type="evidence" value="ECO:0007669"/>
    <property type="project" value="TreeGrafter"/>
</dbReference>
<dbReference type="CDD" id="cd06503">
    <property type="entry name" value="ATP-synt_Fo_b"/>
    <property type="match status" value="1"/>
</dbReference>
<dbReference type="FunFam" id="1.20.5.620:FF:000001">
    <property type="entry name" value="ATP synthase subunit b"/>
    <property type="match status" value="1"/>
</dbReference>
<dbReference type="Gene3D" id="1.20.5.620">
    <property type="entry name" value="F1F0 ATP synthase subunit B, membrane domain"/>
    <property type="match status" value="1"/>
</dbReference>
<dbReference type="HAMAP" id="MF_01398">
    <property type="entry name" value="ATP_synth_b_bprime"/>
    <property type="match status" value="1"/>
</dbReference>
<dbReference type="InterPro" id="IPR028987">
    <property type="entry name" value="ATP_synth_B-like_membr_sf"/>
</dbReference>
<dbReference type="InterPro" id="IPR002146">
    <property type="entry name" value="ATP_synth_b/b'su_bac/chlpt"/>
</dbReference>
<dbReference type="InterPro" id="IPR005864">
    <property type="entry name" value="ATP_synth_F0_bsu_bac"/>
</dbReference>
<dbReference type="InterPro" id="IPR050059">
    <property type="entry name" value="ATP_synthase_B_chain"/>
</dbReference>
<dbReference type="NCBIfam" id="TIGR01144">
    <property type="entry name" value="ATP_synt_b"/>
    <property type="match status" value="1"/>
</dbReference>
<dbReference type="NCBIfam" id="NF004411">
    <property type="entry name" value="PRK05759.1-2"/>
    <property type="match status" value="1"/>
</dbReference>
<dbReference type="NCBIfam" id="NF004413">
    <property type="entry name" value="PRK05759.1-4"/>
    <property type="match status" value="1"/>
</dbReference>
<dbReference type="PANTHER" id="PTHR33445:SF1">
    <property type="entry name" value="ATP SYNTHASE SUBUNIT B"/>
    <property type="match status" value="1"/>
</dbReference>
<dbReference type="PANTHER" id="PTHR33445">
    <property type="entry name" value="ATP SYNTHASE SUBUNIT B', CHLOROPLASTIC"/>
    <property type="match status" value="1"/>
</dbReference>
<dbReference type="Pfam" id="PF00430">
    <property type="entry name" value="ATP-synt_B"/>
    <property type="match status" value="1"/>
</dbReference>
<dbReference type="SUPFAM" id="SSF81573">
    <property type="entry name" value="F1F0 ATP synthase subunit B, membrane domain"/>
    <property type="match status" value="1"/>
</dbReference>
<evidence type="ECO:0000255" key="1">
    <source>
        <dbReference type="HAMAP-Rule" id="MF_01398"/>
    </source>
</evidence>
<proteinExistence type="inferred from homology"/>
<accession>Q1CCH1</accession>
<accession>D1Q305</accession>
<gene>
    <name evidence="1" type="primary">atpF</name>
    <name type="ordered locus">YPN_3982</name>
    <name type="ORF">YP516_4518</name>
</gene>
<keyword id="KW-0066">ATP synthesis</keyword>
<keyword id="KW-0997">Cell inner membrane</keyword>
<keyword id="KW-1003">Cell membrane</keyword>
<keyword id="KW-0138">CF(0)</keyword>
<keyword id="KW-0375">Hydrogen ion transport</keyword>
<keyword id="KW-0406">Ion transport</keyword>
<keyword id="KW-0472">Membrane</keyword>
<keyword id="KW-0812">Transmembrane</keyword>
<keyword id="KW-1133">Transmembrane helix</keyword>
<keyword id="KW-0813">Transport</keyword>
<organism>
    <name type="scientific">Yersinia pestis bv. Antiqua (strain Nepal516)</name>
    <dbReference type="NCBI Taxonomy" id="377628"/>
    <lineage>
        <taxon>Bacteria</taxon>
        <taxon>Pseudomonadati</taxon>
        <taxon>Pseudomonadota</taxon>
        <taxon>Gammaproteobacteria</taxon>
        <taxon>Enterobacterales</taxon>
        <taxon>Yersiniaceae</taxon>
        <taxon>Yersinia</taxon>
    </lineage>
</organism>
<sequence length="156" mass="17258">MNLNATILGQAIAFVLFVIFCMKYVWPPIMAAIEKRQQEIADGLSSAERAKKDLDLAQANATDQLKKAKAEAQVIIEQASKRKAQILDEAKAEAEQERNKIVAQAQAEIDAERKRAREELRKQVAMLAIAGAEKIIERSVDEAANSDIVDKLVAEL</sequence>
<reference key="1">
    <citation type="journal article" date="2006" name="J. Bacteriol.">
        <title>Complete genome sequence of Yersinia pestis strains Antiqua and Nepal516: evidence of gene reduction in an emerging pathogen.</title>
        <authorList>
            <person name="Chain P.S.G."/>
            <person name="Hu P."/>
            <person name="Malfatti S.A."/>
            <person name="Radnedge L."/>
            <person name="Larimer F."/>
            <person name="Vergez L.M."/>
            <person name="Worsham P."/>
            <person name="Chu M.C."/>
            <person name="Andersen G.L."/>
        </authorList>
    </citation>
    <scope>NUCLEOTIDE SEQUENCE [LARGE SCALE GENOMIC DNA]</scope>
    <source>
        <strain>Nepal516</strain>
    </source>
</reference>
<reference key="2">
    <citation type="submission" date="2009-04" db="EMBL/GenBank/DDBJ databases">
        <title>Yersinia pestis Nepal516A whole genome shotgun sequencing project.</title>
        <authorList>
            <person name="Plunkett G. III"/>
            <person name="Anderson B.D."/>
            <person name="Baumler D.J."/>
            <person name="Burland V."/>
            <person name="Cabot E.L."/>
            <person name="Glasner J.D."/>
            <person name="Mau B."/>
            <person name="Neeno-Eckwall E."/>
            <person name="Perna N.T."/>
            <person name="Munk A.C."/>
            <person name="Tapia R."/>
            <person name="Green L.D."/>
            <person name="Rogers Y.C."/>
            <person name="Detter J.C."/>
            <person name="Bruce D.C."/>
            <person name="Brettin T.S."/>
        </authorList>
    </citation>
    <scope>NUCLEOTIDE SEQUENCE [LARGE SCALE GENOMIC DNA]</scope>
    <source>
        <strain>Nepal516</strain>
    </source>
</reference>